<protein>
    <recommendedName>
        <fullName>Gag-Pol polyprotein</fullName>
    </recommendedName>
    <alternativeName>
        <fullName>Pr170Gag-Pol</fullName>
    </alternativeName>
    <component>
        <recommendedName>
            <fullName>Matrix protein p16</fullName>
            <shortName>MA</shortName>
        </recommendedName>
    </component>
    <component>
        <recommendedName>
            <fullName>p2L</fullName>
        </recommendedName>
    </component>
    <component>
        <recommendedName>
            <fullName>Capsid protein p26</fullName>
            <shortName>CA</shortName>
        </recommendedName>
    </component>
    <component>
        <recommendedName>
            <fullName>p3</fullName>
        </recommendedName>
    </component>
    <component>
        <recommendedName>
            <fullName>Transframe peptide</fullName>
        </recommendedName>
        <alternativeName>
            <fullName>p11</fullName>
        </alternativeName>
    </component>
    <component>
        <recommendedName>
            <fullName>Protease</fullName>
            <ecNumber>3.4.23.-</ecNumber>
        </recommendedName>
        <alternativeName>
            <fullName>P119</fullName>
        </alternativeName>
        <alternativeName>
            <fullName>Retropepsin</fullName>
        </alternativeName>
    </component>
    <component>
        <recommendedName>
            <fullName>Reverse transcriptase/ribonuclease H</fullName>
            <shortName>RT</shortName>
            <ecNumber>2.7.7.49</ecNumber>
            <ecNumber>2.7.7.7</ecNumber>
            <ecNumber>3.1.26.13</ecNumber>
        </recommendedName>
        <alternativeName>
            <fullName>Exoribonuclease H</fullName>
            <ecNumber>3.1.13.2</ecNumber>
        </alternativeName>
        <alternativeName>
            <fullName>P72</fullName>
        </alternativeName>
    </component>
    <component>
        <recommendedName>
            <fullName>Integrase</fullName>
            <shortName>IN</shortName>
            <ecNumber evidence="2">2.7.7.-</ecNumber>
            <ecNumber evidence="2">3.1.-.-</ecNumber>
        </recommendedName>
    </component>
</protein>
<feature type="chain" id="PRO_0000272324" description="Gag-Pol polyprotein">
    <location>
        <begin position="1"/>
        <end position="1475"/>
    </location>
</feature>
<feature type="chain" id="PRO_0000272325" description="Matrix protein p16" evidence="3">
    <location>
        <begin position="1"/>
        <end position="126"/>
    </location>
</feature>
<feature type="peptide" id="PRO_0000272326" description="p2L" evidence="1">
    <location>
        <begin position="127"/>
        <end position="148"/>
    </location>
</feature>
<feature type="chain" id="PRO_0000272327" description="Capsid protein p26" evidence="3">
    <location>
        <begin position="149"/>
        <end position="367"/>
    </location>
</feature>
<feature type="peptide" id="PRO_0000272328" description="p3" evidence="1">
    <location>
        <begin position="368"/>
        <end position="392"/>
    </location>
</feature>
<feature type="chain" id="PRO_0000272329" description="Transframe peptide" evidence="3">
    <location>
        <begin position="393"/>
        <end position="472"/>
    </location>
</feature>
<feature type="chain" id="PRO_0000038823" description="Protease" evidence="3">
    <location>
        <begin position="473"/>
        <end position="562"/>
    </location>
</feature>
<feature type="chain" id="PRO_0000038824" description="Reverse transcriptase/ribonuclease H" evidence="3">
    <location>
        <begin position="563"/>
        <end position="1193"/>
    </location>
</feature>
<feature type="chain" id="PRO_0000038825" description="Integrase" evidence="3">
    <location>
        <begin position="1194"/>
        <end position="1475"/>
    </location>
</feature>
<feature type="domain" description="Peptidase A2" evidence="5">
    <location>
        <begin position="492"/>
        <end position="565"/>
    </location>
</feature>
<feature type="domain" description="Reverse transcriptase" evidence="6">
    <location>
        <begin position="619"/>
        <end position="806"/>
    </location>
</feature>
<feature type="domain" description="RNase H type-1" evidence="7">
    <location>
        <begin position="999"/>
        <end position="1119"/>
    </location>
</feature>
<feature type="domain" description="Integrase catalytic" evidence="9">
    <location>
        <begin position="1248"/>
        <end position="1400"/>
    </location>
</feature>
<feature type="zinc finger region" description="CCHC-type 1" evidence="4">
    <location>
        <begin position="403"/>
        <end position="420"/>
    </location>
</feature>
<feature type="zinc finger region" description="CCHC-type 2" evidence="4">
    <location>
        <begin position="421"/>
        <end position="438"/>
    </location>
</feature>
<feature type="zinc finger region" description="Integrase-type" evidence="8">
    <location>
        <begin position="1199"/>
        <end position="1240"/>
    </location>
</feature>
<feature type="DNA-binding region" description="Integrase-type" evidence="10">
    <location>
        <begin position="1419"/>
        <end position="1465"/>
    </location>
</feature>
<feature type="region of interest" description="Disordered" evidence="12">
    <location>
        <begin position="130"/>
        <end position="159"/>
    </location>
</feature>
<feature type="compositionally biased region" description="Low complexity" evidence="12">
    <location>
        <begin position="130"/>
        <end position="147"/>
    </location>
</feature>
<feature type="active site" evidence="11">
    <location>
        <position position="497"/>
    </location>
</feature>
<feature type="binding site" evidence="8">
    <location>
        <position position="1208"/>
    </location>
    <ligand>
        <name>Zn(2+)</name>
        <dbReference type="ChEBI" id="CHEBI:29105"/>
    </ligand>
</feature>
<feature type="binding site" evidence="8">
    <location>
        <position position="1212"/>
    </location>
    <ligand>
        <name>Zn(2+)</name>
        <dbReference type="ChEBI" id="CHEBI:29105"/>
    </ligand>
</feature>
<feature type="binding site" evidence="8">
    <location>
        <position position="1236"/>
    </location>
    <ligand>
        <name>Zn(2+)</name>
        <dbReference type="ChEBI" id="CHEBI:29105"/>
    </ligand>
</feature>
<feature type="binding site" evidence="8">
    <location>
        <position position="1239"/>
    </location>
    <ligand>
        <name>Zn(2+)</name>
        <dbReference type="ChEBI" id="CHEBI:29105"/>
    </ligand>
</feature>
<feature type="site" description="Cleavage; by viral protease" evidence="3">
    <location>
        <begin position="126"/>
        <end position="127"/>
    </location>
</feature>
<feature type="site" description="Cleavage; by viral protease" evidence="3">
    <location>
        <begin position="148"/>
        <end position="149"/>
    </location>
</feature>
<feature type="site" description="Cleavage; by viral protease" evidence="1">
    <location>
        <begin position="367"/>
        <end position="368"/>
    </location>
</feature>
<feature type="site" description="Cleavage; by viral protease" evidence="1">
    <location>
        <begin position="392"/>
        <end position="393"/>
    </location>
</feature>
<feature type="site" description="Cleavage; by viral protease" evidence="3">
    <location>
        <begin position="472"/>
        <end position="473"/>
    </location>
</feature>
<feature type="site" description="Cleavage; by viral protease" evidence="3">
    <location>
        <begin position="562"/>
        <end position="563"/>
    </location>
</feature>
<feature type="site" description="Cleavage; by viral protease" evidence="3">
    <location>
        <begin position="1193"/>
        <end position="1194"/>
    </location>
</feature>
<feature type="sequence variant" description="In strain: Isolate R29-106 and Isolate R29-Nadin.">
    <original>P</original>
    <variation>L</variation>
    <location>
        <position position="17"/>
    </location>
</feature>
<feature type="sequence variant" description="In strain: Isolate R29-106.">
    <original>D</original>
    <variation>E</variation>
    <location>
        <position position="117"/>
    </location>
</feature>
<feature type="sequence variant" description="In strain: Isolate R29-Nadin.">
    <original>T</original>
    <variation>I</variation>
    <location>
        <position position="454"/>
    </location>
</feature>
<feature type="sequence variant" description="In strain: Isolate R29-Nadin.">
    <original>V</original>
    <variation>I</variation>
    <location>
        <position position="577"/>
    </location>
</feature>
<feature type="sequence variant" description="In strain: Isolate R29-Nadin.">
    <original>R</original>
    <variation>K</variation>
    <location>
        <position position="645"/>
    </location>
</feature>
<feature type="sequence variant" description="In strain: Isolate R29-Nadin.">
    <original>V</original>
    <variation>I</variation>
    <location>
        <position position="729"/>
    </location>
</feature>
<feature type="sequence variant" description="In strain: Isolate R29-Nadin.">
    <original>V</original>
    <variation>I</variation>
    <location>
        <position position="1095"/>
    </location>
</feature>
<feature type="sequence variant" description="In strain: Isolate R29-106 and Isolate R29-Nadin.">
    <original>K</original>
    <variation>R</variation>
    <location>
        <position position="1226"/>
    </location>
</feature>
<feature type="sequence variant" description="In strain: Isolate R29-106 and Isolate R29-Nadin.">
    <original>T</original>
    <variation>A</variation>
    <location>
        <position position="1244"/>
    </location>
</feature>
<feature type="strand" evidence="15">
    <location>
        <begin position="1257"/>
        <end position="1265"/>
    </location>
</feature>
<feature type="strand" evidence="15">
    <location>
        <begin position="1268"/>
        <end position="1275"/>
    </location>
</feature>
<feature type="turn" evidence="15">
    <location>
        <begin position="1276"/>
        <end position="1278"/>
    </location>
</feature>
<feature type="strand" evidence="15">
    <location>
        <begin position="1281"/>
        <end position="1289"/>
    </location>
</feature>
<feature type="helix" evidence="15">
    <location>
        <begin position="1291"/>
        <end position="1304"/>
    </location>
</feature>
<feature type="strand" evidence="15">
    <location>
        <begin position="1308"/>
        <end position="1312"/>
    </location>
</feature>
<feature type="helix" evidence="15">
    <location>
        <begin position="1316"/>
        <end position="1319"/>
    </location>
</feature>
<feature type="helix" evidence="15">
    <location>
        <begin position="1321"/>
        <end position="1329"/>
    </location>
</feature>
<feature type="strand" evidence="15">
    <location>
        <begin position="1333"/>
        <end position="1338"/>
    </location>
</feature>
<feature type="helix" evidence="15">
    <location>
        <begin position="1342"/>
        <end position="1362"/>
    </location>
</feature>
<feature type="helix" evidence="15">
    <location>
        <begin position="1363"/>
        <end position="1365"/>
    </location>
</feature>
<feature type="helix" evidence="15">
    <location>
        <begin position="1369"/>
        <end position="1382"/>
    </location>
</feature>
<feature type="helix" evidence="15">
    <location>
        <begin position="1392"/>
        <end position="1401"/>
    </location>
</feature>
<gene>
    <name type="primary">gag-pol</name>
</gene>
<comment type="function">
    <text evidence="1">Matrix protein p16 forms the outer shell of the core of the virus, lining the inner surface of the viral membrane.</text>
</comment>
<comment type="function">
    <text evidence="13">Capsid protein p26 forms the conical core of the virus that encapsulates the genomic RNA-nucleocapsid complex. Interaction between incoming particle-associated Gag proteins and host dynein allows intracellular microtubule-dependent virus transport toward the perinuclear region, prior to nucleus translocation and integration into host genome.</text>
</comment>
<comment type="function">
    <text evidence="5">The aspartyl protease mediates proteolytic cleavages of Gag and Gag-Pol polyproteins during or shortly after the release of the virion from the plasma membrane. Cleavages take place as an ordered, step-wise cascade to yield mature proteins. This process is called maturation. Displays maximal activity during the budding process just prior to particle release from the cell.</text>
</comment>
<comment type="function">
    <text evidence="1">Reverse transcriptase/ribonuclease H (RT) is a multifunctional enzyme that converts the viral RNA genome into dsDNA in the cytoplasm, shortly after virus entry into the cell. This enzyme displays a DNA polymerase activity that can copy either DNA or RNA templates, and a ribonuclease H (RNase H) activity that cleaves the RNA strand of RNA-DNA heteroduplexes in a partially processive 3' to 5' endonucleasic mode. Conversion of viral genomic RNA into dsDNA requires many steps. A tRNA binds to the primer-binding site (PBS) situated at the 5'-end of the viral RNA. RT uses the 3' end of the tRNA primer to perform a short round of RNA-dependent minus-strand DNA synthesis. The reading proceeds through the U5 region and ends after the repeated (R) region which is present at both ends of viral RNA. The portion of the RNA-DNA heteroduplex is digested by the RNase H, resulting in a ssDNA product attached to the tRNA primer. This ssDNA/tRNA hybridizes with the identical R region situated at the 3' end of viral RNA. This template exchange, known as minus-strand DNA strong stop transfer, can be either intra- or intermolecular. RT uses the 3' end of this newly synthesized short ssDNA to perform the RNA-dependent minus-strand DNA synthesis of the whole template. RNase H digests the RNA template except for a polypurine tract (PPT) situated at the 5'-end of the genome. It is not clear if both polymerase and RNase H activities are simultaneous. RNase H probably can proceed both in a polymerase-dependent (RNA cut into small fragments by the same RT performing DNA synthesis) and a polymerase-independent mode (cleavage of remaining RNA fragments by free RTs). Secondly, RT performs DNA-directed plus-strand DNA synthesis using the PPT that has not been removed by RNase H as primer. PPT and tRNA primers are then removed by RNase H. The 3' and 5' ssDNA PBS regions hybridize to form a circular dsDNA intermediate. Strand displacement synthesis by RT to the PBS and PPT ends produces a blunt ended, linear dsDNA copy of the viral genome that includes long terminal repeats (LTRs) at both ends (By similarity).</text>
</comment>
<comment type="function">
    <text evidence="1">Integrase catalyzes viral DNA integration into the host chromosome, by performing a series of DNA cutting and joining reactions. This enzyme activity takes place after virion entry into a cell and reverse transcription of the RNA genome in dsDNA (By similarity).</text>
</comment>
<comment type="catalytic activity">
    <reaction evidence="6">
        <text>DNA(n) + a 2'-deoxyribonucleoside 5'-triphosphate = DNA(n+1) + diphosphate</text>
        <dbReference type="Rhea" id="RHEA:22508"/>
        <dbReference type="Rhea" id="RHEA-COMP:17339"/>
        <dbReference type="Rhea" id="RHEA-COMP:17340"/>
        <dbReference type="ChEBI" id="CHEBI:33019"/>
        <dbReference type="ChEBI" id="CHEBI:61560"/>
        <dbReference type="ChEBI" id="CHEBI:173112"/>
        <dbReference type="EC" id="2.7.7.49"/>
    </reaction>
</comment>
<comment type="catalytic activity">
    <reaction evidence="6">
        <text>DNA(n) + a 2'-deoxyribonucleoside 5'-triphosphate = DNA(n+1) + diphosphate</text>
        <dbReference type="Rhea" id="RHEA:22508"/>
        <dbReference type="Rhea" id="RHEA-COMP:17339"/>
        <dbReference type="Rhea" id="RHEA-COMP:17340"/>
        <dbReference type="ChEBI" id="CHEBI:33019"/>
        <dbReference type="ChEBI" id="CHEBI:61560"/>
        <dbReference type="ChEBI" id="CHEBI:173112"/>
        <dbReference type="EC" id="2.7.7.7"/>
    </reaction>
</comment>
<comment type="catalytic activity">
    <reaction>
        <text>Endohydrolysis of RNA in RNA/DNA hybrids. Three different cleavage modes: 1. sequence-specific internal cleavage of RNA. Human immunodeficiency virus type 1 and Moloney murine leukemia virus enzymes prefer to cleave the RNA strand one nucleotide away from the RNA-DNA junction. 2. RNA 5'-end directed cleavage 13-19 nucleotides from the RNA end. 3. DNA 3'-end directed cleavage 15-20 nucleotides away from the primer terminus.</text>
        <dbReference type="EC" id="3.1.26.13"/>
    </reaction>
</comment>
<comment type="catalytic activity">
    <reaction>
        <text>3'-end directed exonucleolytic cleavage of viral RNA-DNA hybrid.</text>
        <dbReference type="EC" id="3.1.13.2"/>
    </reaction>
</comment>
<comment type="subunit">
    <text evidence="13">Interacts with host light chain cytoplasmic dynein DYNLL1; this interaction is critical for intracellular microtubule-dependent viral genome transport.</text>
</comment>
<comment type="subcellular location">
    <molecule>Matrix protein p16</molecule>
    <subcellularLocation>
        <location evidence="14">Virion</location>
    </subcellularLocation>
</comment>
<comment type="subcellular location">
    <molecule>Capsid protein p26</molecule>
    <subcellularLocation>
        <location evidence="14">Virion</location>
    </subcellularLocation>
</comment>
<comment type="alternative products">
    <event type="ribosomal frameshifting"/>
    <isoform>
        <id>P19560-1</id>
        <name>Gag-Pol polyprotein</name>
        <sequence type="displayed"/>
    </isoform>
    <isoform>
        <id>P19558-1</id>
        <name>Gag polyprotein</name>
        <sequence type="external"/>
    </isoform>
    <text>This strategy of translation probably allows the virus to modulate the quantity of each viral protein.</text>
</comment>
<comment type="PTM">
    <text evidence="1">Specific enzymatic cleavages by the viral protease yield mature proteins. The protease is released by autocatalytic cleavage. The polyprotein is cleaved during and after budding, this process is termed maturation (By similarity).</text>
</comment>
<comment type="miscellaneous">
    <text evidence="1">The reverse transcriptase is an error-prone enzyme that lacks a proof-reading function. High mutations rate is a direct consequence of this characteristic. RT also displays frequent template switching leading to high recombination rate. Recombination mostly occurs between homologous regions of the two copackaged RNA genomes. If these two RNA molecules derive from different viral strains, reverse transcription will give rise to highly recombinated proviral DNAs (By similarity).</text>
</comment>
<comment type="miscellaneous">
    <text>The sequence shown is that of isolate R29-127.</text>
</comment>
<comment type="miscellaneous">
    <molecule>Isoform Gag-Pol polyprotein</molecule>
    <text>Produced by -1 ribosomal frameshifting at the gag-pol genes boundary.</text>
</comment>
<organism>
    <name type="scientific">Bovine immunodeficiency virus (strain R29)</name>
    <name type="common">BIV</name>
    <name type="synonym">Bovine immunodeficiency-like virus</name>
    <dbReference type="NCBI Taxonomy" id="417296"/>
    <lineage>
        <taxon>Viruses</taxon>
        <taxon>Riboviria</taxon>
        <taxon>Pararnavirae</taxon>
        <taxon>Artverviricota</taxon>
        <taxon>Revtraviricetes</taxon>
        <taxon>Ortervirales</taxon>
        <taxon>Retroviridae</taxon>
        <taxon>Orthoretrovirinae</taxon>
        <taxon>Lentivirus</taxon>
        <taxon>Bovine immunodeficiency virus</taxon>
    </lineage>
</organism>
<name>POL_BIV29</name>
<reference key="1">
    <citation type="journal article" date="1990" name="Virology">
        <title>Nucleotide sequence and genome organization of biologically active proviruses of the bovine immunodeficiency-like virus.</title>
        <authorList>
            <person name="Garvey K.J."/>
            <person name="Oberste M.S."/>
            <person name="Elser J.E."/>
            <person name="Braun M.J."/>
            <person name="Gonda M.A."/>
        </authorList>
    </citation>
    <scope>NUCLEOTIDE SEQUENCE [GENOMIC RNA]</scope>
    <source>
        <strain>Isolate R29-106</strain>
        <strain>Isolate R29-127</strain>
    </source>
</reference>
<reference key="2">
    <citation type="submission" date="1992-10" db="EMBL/GenBank/DDBJ databases">
        <title>Isolation and characterization of cDNAs encoding rev and tat of bovine immunodeficiency-like virus.</title>
        <authorList>
            <person name="Nadin-Davis S.A."/>
            <person name="Chang S.C."/>
            <person name="Roth J.A."/>
            <person name="Carpenter S."/>
        </authorList>
    </citation>
    <scope>NUCLEOTIDE SEQUENCE [MRNA]</scope>
    <source>
        <strain>Isolate R29-Nadin</strain>
    </source>
</reference>
<reference key="3">
    <citation type="journal article" date="1992" name="J. Virol.">
        <title>Immunological characterization of the gag gene products of bovine immunodeficiency virus.</title>
        <authorList>
            <person name="Battles J.K."/>
            <person name="Hu M.Y."/>
            <person name="Rasmussen L."/>
            <person name="Tobin G.J."/>
            <person name="Gonda M.A."/>
        </authorList>
    </citation>
    <scope>RIBOSOMAL FRAMESHIFT</scope>
    <scope>PROTEOLYTIC PROCESSING OF POLYPROTEIN</scope>
    <source>
        <strain>Isolate R29-127</strain>
    </source>
</reference>
<reference key="4">
    <citation type="journal article" date="2010" name="Cell. Microbiol.">
        <title>Microtubule-dependent retrograde transport of bovine immunodeficiency virus.</title>
        <authorList>
            <person name="Su Y."/>
            <person name="Qiao W."/>
            <person name="Guo T."/>
            <person name="Tan J."/>
            <person name="Li Z."/>
            <person name="Chen Y."/>
            <person name="Li X."/>
            <person name="Li Y."/>
            <person name="Zhou J."/>
            <person name="Chen Q."/>
        </authorList>
    </citation>
    <scope>FUNCTION</scope>
    <scope>INTERACTION WITH HOST DYNLL1</scope>
</reference>
<dbReference type="EC" id="3.4.23.-"/>
<dbReference type="EC" id="2.7.7.49"/>
<dbReference type="EC" id="2.7.7.7"/>
<dbReference type="EC" id="3.1.26.13"/>
<dbReference type="EC" id="3.1.13.2"/>
<dbReference type="EC" id="2.7.7.-" evidence="2"/>
<dbReference type="EC" id="3.1.-.-" evidence="2"/>
<dbReference type="EMBL" id="M32690">
    <property type="protein sequence ID" value="AAA91271.1"/>
    <property type="status" value="ALT_SEQ"/>
    <property type="molecule type" value="Genomic_RNA"/>
</dbReference>
<dbReference type="EMBL" id="L04972">
    <property type="protein sequence ID" value="AAA42767.1"/>
    <property type="status" value="ALT_SEQ"/>
    <property type="molecule type" value="Genomic_DNA"/>
</dbReference>
<dbReference type="PIR" id="B34742">
    <property type="entry name" value="GNLJBT"/>
</dbReference>
<dbReference type="PDB" id="3KKR">
    <property type="method" value="X-ray"/>
    <property type="resolution" value="2.45 A"/>
    <property type="chains" value="A=1257-1405"/>
</dbReference>
<dbReference type="PDB" id="3KKS">
    <property type="method" value="X-ray"/>
    <property type="resolution" value="2.20 A"/>
    <property type="chains" value="A/B=1257-1405"/>
</dbReference>
<dbReference type="PDBsum" id="3KKR"/>
<dbReference type="PDBsum" id="3KKS"/>
<dbReference type="SMR" id="P19560"/>
<dbReference type="MEROPS" id="A02.005"/>
<dbReference type="KEGG" id="vg:1489971"/>
<dbReference type="EvolutionaryTrace" id="P19560"/>
<dbReference type="PRO" id="PR:P19560"/>
<dbReference type="Proteomes" id="UP000243495">
    <property type="component" value="Segment"/>
</dbReference>
<dbReference type="GO" id="GO:0043657">
    <property type="term" value="C:host cell"/>
    <property type="evidence" value="ECO:0007669"/>
    <property type="project" value="GOC"/>
</dbReference>
<dbReference type="GO" id="GO:0019013">
    <property type="term" value="C:viral nucleocapsid"/>
    <property type="evidence" value="ECO:0007669"/>
    <property type="project" value="UniProtKB-KW"/>
</dbReference>
<dbReference type="GO" id="GO:0004190">
    <property type="term" value="F:aspartic-type endopeptidase activity"/>
    <property type="evidence" value="ECO:0007669"/>
    <property type="project" value="UniProtKB-KW"/>
</dbReference>
<dbReference type="GO" id="GO:0003677">
    <property type="term" value="F:DNA binding"/>
    <property type="evidence" value="ECO:0007669"/>
    <property type="project" value="UniProtKB-KW"/>
</dbReference>
<dbReference type="GO" id="GO:0003887">
    <property type="term" value="F:DNA-directed DNA polymerase activity"/>
    <property type="evidence" value="ECO:0007669"/>
    <property type="project" value="UniProtKB-KW"/>
</dbReference>
<dbReference type="GO" id="GO:0004533">
    <property type="term" value="F:exoribonuclease H activity"/>
    <property type="evidence" value="ECO:0007669"/>
    <property type="project" value="UniProtKB-EC"/>
</dbReference>
<dbReference type="GO" id="GO:0035613">
    <property type="term" value="F:RNA stem-loop binding"/>
    <property type="evidence" value="ECO:0007669"/>
    <property type="project" value="TreeGrafter"/>
</dbReference>
<dbReference type="GO" id="GO:0003964">
    <property type="term" value="F:RNA-directed DNA polymerase activity"/>
    <property type="evidence" value="ECO:0007669"/>
    <property type="project" value="UniProtKB-KW"/>
</dbReference>
<dbReference type="GO" id="GO:0004523">
    <property type="term" value="F:RNA-DNA hybrid ribonuclease activity"/>
    <property type="evidence" value="ECO:0007669"/>
    <property type="project" value="InterPro"/>
</dbReference>
<dbReference type="GO" id="GO:0039660">
    <property type="term" value="F:structural constituent of virion"/>
    <property type="evidence" value="ECO:0007669"/>
    <property type="project" value="UniProtKB-KW"/>
</dbReference>
<dbReference type="GO" id="GO:0008270">
    <property type="term" value="F:zinc ion binding"/>
    <property type="evidence" value="ECO:0007669"/>
    <property type="project" value="UniProtKB-KW"/>
</dbReference>
<dbReference type="GO" id="GO:0015074">
    <property type="term" value="P:DNA integration"/>
    <property type="evidence" value="ECO:0007669"/>
    <property type="project" value="UniProtKB-KW"/>
</dbReference>
<dbReference type="GO" id="GO:0006310">
    <property type="term" value="P:DNA recombination"/>
    <property type="evidence" value="ECO:0007669"/>
    <property type="project" value="UniProtKB-KW"/>
</dbReference>
<dbReference type="GO" id="GO:0075713">
    <property type="term" value="P:establishment of integrated proviral latency"/>
    <property type="evidence" value="ECO:0007669"/>
    <property type="project" value="UniProtKB-KW"/>
</dbReference>
<dbReference type="GO" id="GO:0075521">
    <property type="term" value="P:microtubule-dependent intracellular transport of viral material towards nucleus"/>
    <property type="evidence" value="ECO:0007669"/>
    <property type="project" value="UniProtKB-KW"/>
</dbReference>
<dbReference type="GO" id="GO:0006508">
    <property type="term" value="P:proteolysis"/>
    <property type="evidence" value="ECO:0007669"/>
    <property type="project" value="UniProtKB-KW"/>
</dbReference>
<dbReference type="GO" id="GO:0046718">
    <property type="term" value="P:symbiont entry into host cell"/>
    <property type="evidence" value="ECO:0007669"/>
    <property type="project" value="UniProtKB-KW"/>
</dbReference>
<dbReference type="GO" id="GO:0044826">
    <property type="term" value="P:viral genome integration into host DNA"/>
    <property type="evidence" value="ECO:0007669"/>
    <property type="project" value="UniProtKB-KW"/>
</dbReference>
<dbReference type="GO" id="GO:0075523">
    <property type="term" value="P:viral translational frameshifting"/>
    <property type="evidence" value="ECO:0007669"/>
    <property type="project" value="UniProtKB-KW"/>
</dbReference>
<dbReference type="Gene3D" id="1.10.10.200">
    <property type="match status" value="1"/>
</dbReference>
<dbReference type="Gene3D" id="1.10.1200.30">
    <property type="match status" value="1"/>
</dbReference>
<dbReference type="Gene3D" id="3.30.70.270">
    <property type="match status" value="2"/>
</dbReference>
<dbReference type="Gene3D" id="2.40.70.10">
    <property type="entry name" value="Acid Proteases"/>
    <property type="match status" value="1"/>
</dbReference>
<dbReference type="Gene3D" id="3.10.10.10">
    <property type="entry name" value="HIV Type 1 Reverse Transcriptase, subunit A, domain 1"/>
    <property type="match status" value="1"/>
</dbReference>
<dbReference type="Gene3D" id="1.10.375.10">
    <property type="entry name" value="Human Immunodeficiency Virus Type 1 Capsid Protein"/>
    <property type="match status" value="1"/>
</dbReference>
<dbReference type="Gene3D" id="2.30.30.10">
    <property type="entry name" value="Integrase, C-terminal domain superfamily, retroviral"/>
    <property type="match status" value="1"/>
</dbReference>
<dbReference type="Gene3D" id="3.30.420.10">
    <property type="entry name" value="Ribonuclease H-like superfamily/Ribonuclease H"/>
    <property type="match status" value="2"/>
</dbReference>
<dbReference type="Gene3D" id="4.10.60.10">
    <property type="entry name" value="Zinc finger, CCHC-type"/>
    <property type="match status" value="1"/>
</dbReference>
<dbReference type="InterPro" id="IPR001969">
    <property type="entry name" value="Aspartic_peptidase_AS"/>
</dbReference>
<dbReference type="InterPro" id="IPR043502">
    <property type="entry name" value="DNA/RNA_pol_sf"/>
</dbReference>
<dbReference type="InterPro" id="IPR045345">
    <property type="entry name" value="Gag_p24_C"/>
</dbReference>
<dbReference type="InterPro" id="IPR017856">
    <property type="entry name" value="Integrase-like_N"/>
</dbReference>
<dbReference type="InterPro" id="IPR036862">
    <property type="entry name" value="Integrase_C_dom_sf_retrovir"/>
</dbReference>
<dbReference type="InterPro" id="IPR001037">
    <property type="entry name" value="Integrase_C_retrovir"/>
</dbReference>
<dbReference type="InterPro" id="IPR001584">
    <property type="entry name" value="Integrase_cat-core"/>
</dbReference>
<dbReference type="InterPro" id="IPR003308">
    <property type="entry name" value="Integrase_Zn-bd_dom_N"/>
</dbReference>
<dbReference type="InterPro" id="IPR001995">
    <property type="entry name" value="Peptidase_A2_cat"/>
</dbReference>
<dbReference type="InterPro" id="IPR021109">
    <property type="entry name" value="Peptidase_aspartic_dom_sf"/>
</dbReference>
<dbReference type="InterPro" id="IPR018061">
    <property type="entry name" value="Retropepsins"/>
</dbReference>
<dbReference type="InterPro" id="IPR008916">
    <property type="entry name" value="Retrov_capsid_C"/>
</dbReference>
<dbReference type="InterPro" id="IPR008919">
    <property type="entry name" value="Retrov_capsid_N"/>
</dbReference>
<dbReference type="InterPro" id="IPR043128">
    <property type="entry name" value="Rev_trsase/Diguanyl_cyclase"/>
</dbReference>
<dbReference type="InterPro" id="IPR012337">
    <property type="entry name" value="RNaseH-like_sf"/>
</dbReference>
<dbReference type="InterPro" id="IPR002156">
    <property type="entry name" value="RNaseH_domain"/>
</dbReference>
<dbReference type="InterPro" id="IPR036397">
    <property type="entry name" value="RNaseH_sf"/>
</dbReference>
<dbReference type="InterPro" id="IPR000477">
    <property type="entry name" value="RT_dom"/>
</dbReference>
<dbReference type="InterPro" id="IPR010661">
    <property type="entry name" value="RVT_thumb"/>
</dbReference>
<dbReference type="InterPro" id="IPR001878">
    <property type="entry name" value="Znf_CCHC"/>
</dbReference>
<dbReference type="InterPro" id="IPR036875">
    <property type="entry name" value="Znf_CCHC_sf"/>
</dbReference>
<dbReference type="PANTHER" id="PTHR41694">
    <property type="entry name" value="ENDOGENOUS RETROVIRUS GROUP K MEMBER POL PROTEIN"/>
    <property type="match status" value="1"/>
</dbReference>
<dbReference type="PANTHER" id="PTHR41694:SF3">
    <property type="entry name" value="RNA-DIRECTED DNA POLYMERASE-RELATED"/>
    <property type="match status" value="1"/>
</dbReference>
<dbReference type="Pfam" id="PF19317">
    <property type="entry name" value="Gag_p24_C"/>
    <property type="match status" value="1"/>
</dbReference>
<dbReference type="Pfam" id="PF00552">
    <property type="entry name" value="IN_DBD_C"/>
    <property type="match status" value="1"/>
</dbReference>
<dbReference type="Pfam" id="PF02022">
    <property type="entry name" value="Integrase_Zn"/>
    <property type="match status" value="1"/>
</dbReference>
<dbReference type="Pfam" id="PF00075">
    <property type="entry name" value="RNase_H"/>
    <property type="match status" value="1"/>
</dbReference>
<dbReference type="Pfam" id="PF00665">
    <property type="entry name" value="rve"/>
    <property type="match status" value="1"/>
</dbReference>
<dbReference type="Pfam" id="PF00077">
    <property type="entry name" value="RVP"/>
    <property type="match status" value="1"/>
</dbReference>
<dbReference type="Pfam" id="PF00078">
    <property type="entry name" value="RVT_1"/>
    <property type="match status" value="1"/>
</dbReference>
<dbReference type="Pfam" id="PF06817">
    <property type="entry name" value="RVT_thumb"/>
    <property type="match status" value="1"/>
</dbReference>
<dbReference type="Pfam" id="PF00098">
    <property type="entry name" value="zf-CCHC"/>
    <property type="match status" value="2"/>
</dbReference>
<dbReference type="SMART" id="SM00343">
    <property type="entry name" value="ZnF_C2HC"/>
    <property type="match status" value="2"/>
</dbReference>
<dbReference type="SUPFAM" id="SSF50630">
    <property type="entry name" value="Acid proteases"/>
    <property type="match status" value="1"/>
</dbReference>
<dbReference type="SUPFAM" id="SSF50122">
    <property type="entry name" value="DNA-binding domain of retroviral integrase"/>
    <property type="match status" value="1"/>
</dbReference>
<dbReference type="SUPFAM" id="SSF56672">
    <property type="entry name" value="DNA/RNA polymerases"/>
    <property type="match status" value="1"/>
</dbReference>
<dbReference type="SUPFAM" id="SSF46919">
    <property type="entry name" value="N-terminal Zn binding domain of HIV integrase"/>
    <property type="match status" value="1"/>
</dbReference>
<dbReference type="SUPFAM" id="SSF47353">
    <property type="entry name" value="Retrovirus capsid dimerization domain-like"/>
    <property type="match status" value="1"/>
</dbReference>
<dbReference type="SUPFAM" id="SSF47943">
    <property type="entry name" value="Retrovirus capsid protein, N-terminal core domain"/>
    <property type="match status" value="1"/>
</dbReference>
<dbReference type="SUPFAM" id="SSF57756">
    <property type="entry name" value="Retrovirus zinc finger-like domains"/>
    <property type="match status" value="1"/>
</dbReference>
<dbReference type="SUPFAM" id="SSF53098">
    <property type="entry name" value="Ribonuclease H-like"/>
    <property type="match status" value="2"/>
</dbReference>
<dbReference type="PROSITE" id="PS50175">
    <property type="entry name" value="ASP_PROT_RETROV"/>
    <property type="match status" value="1"/>
</dbReference>
<dbReference type="PROSITE" id="PS00141">
    <property type="entry name" value="ASP_PROTEASE"/>
    <property type="match status" value="1"/>
</dbReference>
<dbReference type="PROSITE" id="PS50994">
    <property type="entry name" value="INTEGRASE"/>
    <property type="match status" value="1"/>
</dbReference>
<dbReference type="PROSITE" id="PS51027">
    <property type="entry name" value="INTEGRASE_DBD"/>
    <property type="match status" value="1"/>
</dbReference>
<dbReference type="PROSITE" id="PS50879">
    <property type="entry name" value="RNASE_H_1"/>
    <property type="match status" value="1"/>
</dbReference>
<dbReference type="PROSITE" id="PS50878">
    <property type="entry name" value="RT_POL"/>
    <property type="match status" value="1"/>
</dbReference>
<dbReference type="PROSITE" id="PS50158">
    <property type="entry name" value="ZF_CCHC"/>
    <property type="match status" value="2"/>
</dbReference>
<dbReference type="PROSITE" id="PS50876">
    <property type="entry name" value="ZF_INTEGRASE"/>
    <property type="match status" value="1"/>
</dbReference>
<accession>P19560</accession>
<accession>P19561</accession>
<accession>Q65593</accession>
<keyword id="KW-0002">3D-structure</keyword>
<keyword id="KW-0064">Aspartyl protease</keyword>
<keyword id="KW-0167">Capsid protein</keyword>
<keyword id="KW-0175">Coiled coil</keyword>
<keyword id="KW-1176">Cytoplasmic inwards viral transport</keyword>
<keyword id="KW-0229">DNA integration</keyword>
<keyword id="KW-0233">DNA recombination</keyword>
<keyword id="KW-0238">DNA-binding</keyword>
<keyword id="KW-0239">DNA-directed DNA polymerase</keyword>
<keyword id="KW-0255">Endonuclease</keyword>
<keyword id="KW-0945">Host-virus interaction</keyword>
<keyword id="KW-0378">Hydrolase</keyword>
<keyword id="KW-0460">Magnesium</keyword>
<keyword id="KW-0479">Metal-binding</keyword>
<keyword id="KW-1177">Microtubular inwards viral transport</keyword>
<keyword id="KW-0511">Multifunctional enzyme</keyword>
<keyword id="KW-0540">Nuclease</keyword>
<keyword id="KW-0548">Nucleotidyltransferase</keyword>
<keyword id="KW-0645">Protease</keyword>
<keyword id="KW-0677">Repeat</keyword>
<keyword id="KW-0688">Ribosomal frameshifting</keyword>
<keyword id="KW-0694">RNA-binding</keyword>
<keyword id="KW-0695">RNA-directed DNA polymerase</keyword>
<keyword id="KW-0808">Transferase</keyword>
<keyword id="KW-1179">Viral genome integration</keyword>
<keyword id="KW-0468">Viral matrix protein</keyword>
<keyword id="KW-0543">Viral nucleoprotein</keyword>
<keyword id="KW-1188">Viral release from host cell</keyword>
<keyword id="KW-0946">Virion</keyword>
<keyword id="KW-0917">Virion maturation</keyword>
<keyword id="KW-1160">Virus entry into host cell</keyword>
<keyword id="KW-0862">Zinc</keyword>
<keyword id="KW-0863">Zinc-finger</keyword>
<evidence type="ECO:0000250" key="1"/>
<evidence type="ECO:0000250" key="2">
    <source>
        <dbReference type="UniProtKB" id="P04585"/>
    </source>
</evidence>
<evidence type="ECO:0000255" key="3"/>
<evidence type="ECO:0000255" key="4">
    <source>
        <dbReference type="PROSITE-ProRule" id="PRU00047"/>
    </source>
</evidence>
<evidence type="ECO:0000255" key="5">
    <source>
        <dbReference type="PROSITE-ProRule" id="PRU00275"/>
    </source>
</evidence>
<evidence type="ECO:0000255" key="6">
    <source>
        <dbReference type="PROSITE-ProRule" id="PRU00405"/>
    </source>
</evidence>
<evidence type="ECO:0000255" key="7">
    <source>
        <dbReference type="PROSITE-ProRule" id="PRU00408"/>
    </source>
</evidence>
<evidence type="ECO:0000255" key="8">
    <source>
        <dbReference type="PROSITE-ProRule" id="PRU00450"/>
    </source>
</evidence>
<evidence type="ECO:0000255" key="9">
    <source>
        <dbReference type="PROSITE-ProRule" id="PRU00457"/>
    </source>
</evidence>
<evidence type="ECO:0000255" key="10">
    <source>
        <dbReference type="PROSITE-ProRule" id="PRU00506"/>
    </source>
</evidence>
<evidence type="ECO:0000255" key="11">
    <source>
        <dbReference type="PROSITE-ProRule" id="PRU10094"/>
    </source>
</evidence>
<evidence type="ECO:0000256" key="12">
    <source>
        <dbReference type="SAM" id="MobiDB-lite"/>
    </source>
</evidence>
<evidence type="ECO:0000269" key="13">
    <source>
    </source>
</evidence>
<evidence type="ECO:0000305" key="14"/>
<evidence type="ECO:0007829" key="15">
    <source>
        <dbReference type="PDB" id="3KKS"/>
    </source>
</evidence>
<organismHost>
    <name type="scientific">Bos taurus</name>
    <name type="common">Bovine</name>
    <dbReference type="NCBI Taxonomy" id="9913"/>
</organismHost>
<proteinExistence type="evidence at protein level"/>
<sequence>MKRRELEKKLRKVRVTPQQDKYYTIGNLQWAIRMINLMGIKCVCDEECSAAEVALIITQFSALDLENSPIRGKEEVAIKNTLKVFWSLLAGYKPESTETALGYWEAFTYREREARADKEGEIKSIYPSLTQNTQNKKQTSNQTNTQSLPAITTQDGTPRFDPDLMKQLKIWSDATERNGVDLHAVNILGVITANLVQEEIKLLLNSTPKWRLDVQLIESKVREKENAHRTWKQHHPEAPKTDEIIGKGLSSAEQATLISVECRETFRQWVLQAAMEVAQAKHATPGPINIHQGPKEPYTDFINRLVAALEGMAAPETTKEYLLQHLSIDHANEDCQSILRPLGPNTPMEKKLEACRVVGSQKSKMQFLVAAMKEMGIQSPIPAVLPHTPEAYASQTSGPEDGRRCYGCGKTGHLKRNCKQQKCYHCGKPGHQARNCRSKNREVLLCPLWAEEPTTEQFSPEQHEFCDPICTPSYIRLDKQPFIKVFIGGRWVKGLVDTGADEVVLKNIHWDRIKGYPGTPIKQIGVNGVNVAKRKTHVEWRFKDKTGIIDVLFSDTPVNLFGRSLLRSIVTCFTLLVHTEKIEPLPVKVRGPGPKVPQWPLTKEKYQALKEIVKDLLAEGKISEAAWDNPYNTPVFVIKKKGTGRWRMLMDFRELNKITVKGQEFSTGLPYPPGIKECEHLTAIDIKDAYFTIPLHEDFRPFTAFSVVPVNREGPIERFQWNVLPQGWVCSPAIYQTTTQKIIENIKKSHPDVMLYQYMDDLLIGSNRDDHKQIVQEIRDKLGSYGFKTPDEKVQEERVKWIGFELTPKKWRFQPRQLKIKNPLTVNELQQLVGNCVWVQPEVKIPLYPLTDLLRDKTNLQEKIQLTPEAIKCVEEFNLKLKDPEWKDRIREGAELVIKIQMVPRGIVFDLLQDGNPIWGGVKGLNYDHSNKIKKILRTMNELNRTVVIMTGREASFLLPGSSEDWEAALQKEESLTQIFPVKFYRHSCRWTSICGPVRENLTTYYTDGGKKGKTAAAVYWCEGRTKSKVFPGTNQQAELKAICMALLDGPPKMNIITDSRYAYEGMREEPETWAREGIWLEIAKILPFKQYVGVGWVPAHKGIGGNTEADEGVKKALEQMAPCSPPEAILLKPGEKQNLETGIYMQGLRPQSFLPRADLPVAITGTMVDSELQLQLLNIGTEHIRIQKDEVFMTCFLENIPSATEDHERWHTSPDILVRQFHLPKRIAKEIVARCQECKRTTTSPVRGTNPRGRFLWQMDNTHWNKTIIWVAVETNSGLVEAQVIPEETALQVALCILQLIQRYTVLHLHSDNGPCFTAHRIENLCKYLGITKTTGIPYNPQSQGVVERAHRDLKDRLAAYQGDCETVEAALSLALVSLNKKRGGIGGHTPYEIYLESEHTKYQDQLEQQFSKQKIEKWCYVRNRRKEWKGPYKVLWDGDGAAVIEEEGKTALYPHRHMRFIPPPDSDIQDGSS</sequence>